<accession>A4G288</accession>
<proteinExistence type="inferred from homology"/>
<organism>
    <name type="scientific">Herminiimonas arsenicoxydans</name>
    <dbReference type="NCBI Taxonomy" id="204773"/>
    <lineage>
        <taxon>Bacteria</taxon>
        <taxon>Pseudomonadati</taxon>
        <taxon>Pseudomonadota</taxon>
        <taxon>Betaproteobacteria</taxon>
        <taxon>Burkholderiales</taxon>
        <taxon>Oxalobacteraceae</taxon>
        <taxon>Herminiimonas</taxon>
    </lineage>
</organism>
<evidence type="ECO:0000255" key="1">
    <source>
        <dbReference type="HAMAP-Rule" id="MF_00185"/>
    </source>
</evidence>
<dbReference type="EC" id="2.5.1.75" evidence="1"/>
<dbReference type="EMBL" id="CU207211">
    <property type="protein sequence ID" value="CAL60625.1"/>
    <property type="molecule type" value="Genomic_DNA"/>
</dbReference>
<dbReference type="SMR" id="A4G288"/>
<dbReference type="STRING" id="204773.HEAR0405"/>
<dbReference type="KEGG" id="har:HEAR0405"/>
<dbReference type="eggNOG" id="COG0324">
    <property type="taxonomic scope" value="Bacteria"/>
</dbReference>
<dbReference type="HOGENOM" id="CLU_032616_0_0_4"/>
<dbReference type="OrthoDB" id="9776390at2"/>
<dbReference type="Proteomes" id="UP000006697">
    <property type="component" value="Chromosome"/>
</dbReference>
<dbReference type="GO" id="GO:0005524">
    <property type="term" value="F:ATP binding"/>
    <property type="evidence" value="ECO:0007669"/>
    <property type="project" value="UniProtKB-UniRule"/>
</dbReference>
<dbReference type="GO" id="GO:0052381">
    <property type="term" value="F:tRNA dimethylallyltransferase activity"/>
    <property type="evidence" value="ECO:0007669"/>
    <property type="project" value="UniProtKB-UniRule"/>
</dbReference>
<dbReference type="GO" id="GO:0006400">
    <property type="term" value="P:tRNA modification"/>
    <property type="evidence" value="ECO:0007669"/>
    <property type="project" value="TreeGrafter"/>
</dbReference>
<dbReference type="CDD" id="cd02019">
    <property type="entry name" value="NK"/>
    <property type="match status" value="1"/>
</dbReference>
<dbReference type="FunFam" id="1.10.20.140:FF:000001">
    <property type="entry name" value="tRNA dimethylallyltransferase"/>
    <property type="match status" value="1"/>
</dbReference>
<dbReference type="Gene3D" id="1.10.20.140">
    <property type="match status" value="1"/>
</dbReference>
<dbReference type="Gene3D" id="3.40.50.300">
    <property type="entry name" value="P-loop containing nucleotide triphosphate hydrolases"/>
    <property type="match status" value="1"/>
</dbReference>
<dbReference type="HAMAP" id="MF_00185">
    <property type="entry name" value="IPP_trans"/>
    <property type="match status" value="1"/>
</dbReference>
<dbReference type="InterPro" id="IPR039657">
    <property type="entry name" value="Dimethylallyltransferase"/>
</dbReference>
<dbReference type="InterPro" id="IPR018022">
    <property type="entry name" value="IPT"/>
</dbReference>
<dbReference type="InterPro" id="IPR027417">
    <property type="entry name" value="P-loop_NTPase"/>
</dbReference>
<dbReference type="NCBIfam" id="TIGR00174">
    <property type="entry name" value="miaA"/>
    <property type="match status" value="1"/>
</dbReference>
<dbReference type="PANTHER" id="PTHR11088">
    <property type="entry name" value="TRNA DIMETHYLALLYLTRANSFERASE"/>
    <property type="match status" value="1"/>
</dbReference>
<dbReference type="PANTHER" id="PTHR11088:SF60">
    <property type="entry name" value="TRNA DIMETHYLALLYLTRANSFERASE"/>
    <property type="match status" value="1"/>
</dbReference>
<dbReference type="Pfam" id="PF01715">
    <property type="entry name" value="IPPT"/>
    <property type="match status" value="1"/>
</dbReference>
<dbReference type="SUPFAM" id="SSF52540">
    <property type="entry name" value="P-loop containing nucleoside triphosphate hydrolases"/>
    <property type="match status" value="1"/>
</dbReference>
<keyword id="KW-0067">ATP-binding</keyword>
<keyword id="KW-0460">Magnesium</keyword>
<keyword id="KW-0547">Nucleotide-binding</keyword>
<keyword id="KW-1185">Reference proteome</keyword>
<keyword id="KW-0808">Transferase</keyword>
<keyword id="KW-0819">tRNA processing</keyword>
<sequence length="320" mass="34617">MHMTSPSAKPLVVSIMGPTASGKTATALAIAEQIPSEIISVDSALVYREMNIGTAKPTDEERASVPHHLIDILDPLDAYSVMQFRQDALRLVAEISARGKLALLVGGTMLYFKGLKDGLDALPQADAALRAELDAEAALIGSPAMHAKLAKLDPITAARLKPNDTQRIQRALEIITLTGQPMSALLAQAPKSELPFTLLPIALEPSERSVLHARIATRFDAMLKDGGLLDEVRALRARGDLHPGLPSMRCVGYRQSWEYLDGAYGLAELREKGIAATRQLAKRQLTWLRGMPERQTIDCLAPDVAGSILRKIVSADKVPK</sequence>
<comment type="function">
    <text evidence="1">Catalyzes the transfer of a dimethylallyl group onto the adenine at position 37 in tRNAs that read codons beginning with uridine, leading to the formation of N6-(dimethylallyl)adenosine (i(6)A).</text>
</comment>
<comment type="catalytic activity">
    <reaction evidence="1">
        <text>adenosine(37) in tRNA + dimethylallyl diphosphate = N(6)-dimethylallyladenosine(37) in tRNA + diphosphate</text>
        <dbReference type="Rhea" id="RHEA:26482"/>
        <dbReference type="Rhea" id="RHEA-COMP:10162"/>
        <dbReference type="Rhea" id="RHEA-COMP:10375"/>
        <dbReference type="ChEBI" id="CHEBI:33019"/>
        <dbReference type="ChEBI" id="CHEBI:57623"/>
        <dbReference type="ChEBI" id="CHEBI:74411"/>
        <dbReference type="ChEBI" id="CHEBI:74415"/>
        <dbReference type="EC" id="2.5.1.75"/>
    </reaction>
</comment>
<comment type="cofactor">
    <cofactor evidence="1">
        <name>Mg(2+)</name>
        <dbReference type="ChEBI" id="CHEBI:18420"/>
    </cofactor>
</comment>
<comment type="subunit">
    <text evidence="1">Monomer.</text>
</comment>
<comment type="similarity">
    <text evidence="1">Belongs to the IPP transferase family.</text>
</comment>
<gene>
    <name evidence="1" type="primary">miaA</name>
    <name type="ordered locus">HEAR0405</name>
</gene>
<reference key="1">
    <citation type="journal article" date="2007" name="PLoS Genet.">
        <title>A tale of two oxidation states: bacterial colonization of arsenic-rich environments.</title>
        <authorList>
            <person name="Muller D."/>
            <person name="Medigue C."/>
            <person name="Koechler S."/>
            <person name="Barbe V."/>
            <person name="Barakat M."/>
            <person name="Talla E."/>
            <person name="Bonnefoy V."/>
            <person name="Krin E."/>
            <person name="Arsene-Ploetze F."/>
            <person name="Carapito C."/>
            <person name="Chandler M."/>
            <person name="Cournoyer B."/>
            <person name="Cruveiller S."/>
            <person name="Dossat C."/>
            <person name="Duval S."/>
            <person name="Heymann M."/>
            <person name="Leize E."/>
            <person name="Lieutaud A."/>
            <person name="Lievremont D."/>
            <person name="Makita Y."/>
            <person name="Mangenot S."/>
            <person name="Nitschke W."/>
            <person name="Ortet P."/>
            <person name="Perdrial N."/>
            <person name="Schoepp B."/>
            <person name="Siguier P."/>
            <person name="Simeonova D.D."/>
            <person name="Rouy Z."/>
            <person name="Segurens B."/>
            <person name="Turlin E."/>
            <person name="Vallenet D."/>
            <person name="van Dorsselaer A."/>
            <person name="Weiss S."/>
            <person name="Weissenbach J."/>
            <person name="Lett M.-C."/>
            <person name="Danchin A."/>
            <person name="Bertin P.N."/>
        </authorList>
    </citation>
    <scope>NUCLEOTIDE SEQUENCE [LARGE SCALE GENOMIC DNA]</scope>
    <source>
        <strain>ULPAs1</strain>
    </source>
</reference>
<feature type="chain" id="PRO_0000377190" description="tRNA dimethylallyltransferase">
    <location>
        <begin position="1"/>
        <end position="320"/>
    </location>
</feature>
<feature type="region of interest" description="Interaction with substrate tRNA" evidence="1">
    <location>
        <begin position="42"/>
        <end position="45"/>
    </location>
</feature>
<feature type="region of interest" description="Interaction with substrate tRNA" evidence="1">
    <location>
        <begin position="166"/>
        <end position="170"/>
    </location>
</feature>
<feature type="region of interest" description="Interaction with substrate tRNA" evidence="1">
    <location>
        <begin position="249"/>
        <end position="254"/>
    </location>
</feature>
<feature type="binding site" evidence="1">
    <location>
        <begin position="17"/>
        <end position="24"/>
    </location>
    <ligand>
        <name>ATP</name>
        <dbReference type="ChEBI" id="CHEBI:30616"/>
    </ligand>
</feature>
<feature type="binding site" evidence="1">
    <location>
        <begin position="19"/>
        <end position="24"/>
    </location>
    <ligand>
        <name>substrate</name>
    </ligand>
</feature>
<feature type="site" description="Interaction with substrate tRNA" evidence="1">
    <location>
        <position position="108"/>
    </location>
</feature>
<feature type="site" description="Interaction with substrate tRNA" evidence="1">
    <location>
        <position position="130"/>
    </location>
</feature>
<protein>
    <recommendedName>
        <fullName evidence="1">tRNA dimethylallyltransferase</fullName>
        <ecNumber evidence="1">2.5.1.75</ecNumber>
    </recommendedName>
    <alternativeName>
        <fullName evidence="1">Dimethylallyl diphosphate:tRNA dimethylallyltransferase</fullName>
        <shortName evidence="1">DMAPP:tRNA dimethylallyltransferase</shortName>
        <shortName evidence="1">DMATase</shortName>
    </alternativeName>
    <alternativeName>
        <fullName evidence="1">Isopentenyl-diphosphate:tRNA isopentenyltransferase</fullName>
        <shortName evidence="1">IPP transferase</shortName>
        <shortName evidence="1">IPPT</shortName>
        <shortName evidence="1">IPTase</shortName>
    </alternativeName>
</protein>
<name>MIAA_HERAR</name>